<dbReference type="EMBL" id="AF098306">
    <property type="protein sequence ID" value="AAF28420.1"/>
    <property type="molecule type" value="mRNA"/>
</dbReference>
<dbReference type="EMBL" id="AJ457794">
    <property type="protein sequence ID" value="CAD29843.1"/>
    <property type="molecule type" value="Genomic_DNA"/>
</dbReference>
<dbReference type="EMBL" id="AY920732">
    <property type="protein sequence ID" value="AAY16548.1"/>
    <property type="molecule type" value="mRNA"/>
</dbReference>
<dbReference type="EMBL" id="AY920733">
    <property type="protein sequence ID" value="AAY16549.1"/>
    <property type="molecule type" value="mRNA"/>
</dbReference>
<dbReference type="EMBL" id="AY920735">
    <property type="protein sequence ID" value="AAY16551.1"/>
    <property type="molecule type" value="mRNA"/>
</dbReference>
<dbReference type="EMBL" id="AY920736">
    <property type="protein sequence ID" value="AAY16552.1"/>
    <property type="molecule type" value="mRNA"/>
</dbReference>
<dbReference type="EMBL" id="AY920738">
    <property type="protein sequence ID" value="AAY16554.1"/>
    <property type="molecule type" value="mRNA"/>
</dbReference>
<dbReference type="EMBL" id="AY920739">
    <property type="protein sequence ID" value="AAY16555.1"/>
    <property type="molecule type" value="mRNA"/>
</dbReference>
<dbReference type="EMBL" id="AY920741">
    <property type="protein sequence ID" value="AAY16557.1"/>
    <property type="molecule type" value="mRNA"/>
</dbReference>
<dbReference type="EMBL" id="AY920742">
    <property type="protein sequence ID" value="AAY16558.1"/>
    <property type="molecule type" value="mRNA"/>
</dbReference>
<dbReference type="EMBL" id="AY920743">
    <property type="protein sequence ID" value="AAY16559.1"/>
    <property type="molecule type" value="mRNA"/>
</dbReference>
<dbReference type="EMBL" id="AY920744">
    <property type="protein sequence ID" value="AAY16560.1"/>
    <property type="molecule type" value="mRNA"/>
</dbReference>
<dbReference type="EMBL" id="AY920745">
    <property type="protein sequence ID" value="AAY16561.1"/>
    <property type="molecule type" value="mRNA"/>
</dbReference>
<dbReference type="EMBL" id="AY920746">
    <property type="protein sequence ID" value="AAY16562.1"/>
    <property type="molecule type" value="mRNA"/>
</dbReference>
<dbReference type="EMBL" id="DQ994201">
    <property type="protein sequence ID" value="ABN68940.1"/>
    <property type="molecule type" value="Genomic_DNA"/>
</dbReference>
<dbReference type="EMBL" id="DQ994202">
    <property type="protein sequence ID" value="ABN68941.1"/>
    <property type="molecule type" value="Genomic_DNA"/>
</dbReference>
<dbReference type="EMBL" id="DQ994203">
    <property type="protein sequence ID" value="ABN68942.1"/>
    <property type="molecule type" value="Genomic_DNA"/>
</dbReference>
<dbReference type="EMBL" id="DQ994204">
    <property type="protein sequence ID" value="ABN68943.1"/>
    <property type="molecule type" value="Genomic_DNA"/>
</dbReference>
<dbReference type="EMBL" id="DQ994205">
    <property type="protein sequence ID" value="ABN68944.1"/>
    <property type="molecule type" value="Genomic_DNA"/>
</dbReference>
<dbReference type="EMBL" id="DQ994206">
    <property type="protein sequence ID" value="ABN68945.1"/>
    <property type="molecule type" value="Genomic_DNA"/>
</dbReference>
<dbReference type="EMBL" id="DQ994207">
    <property type="protein sequence ID" value="ABN68946.1"/>
    <property type="molecule type" value="Genomic_DNA"/>
</dbReference>
<dbReference type="EMBL" id="DQ994208">
    <property type="protein sequence ID" value="ABN68947.1"/>
    <property type="molecule type" value="Genomic_DNA"/>
</dbReference>
<dbReference type="EMBL" id="DQ994209">
    <property type="protein sequence ID" value="ABN68948.1"/>
    <property type="molecule type" value="Genomic_DNA"/>
</dbReference>
<dbReference type="EMBL" id="DQ994210">
    <property type="protein sequence ID" value="ABN68949.1"/>
    <property type="molecule type" value="Genomic_DNA"/>
</dbReference>
<dbReference type="EMBL" id="AL121881">
    <property type="protein sequence ID" value="CAD19068.1"/>
    <property type="molecule type" value="Genomic_DNA"/>
</dbReference>
<dbReference type="EMBL" id="AL121881">
    <property type="protein sequence ID" value="CAI42369.1"/>
    <property type="molecule type" value="Genomic_DNA"/>
</dbReference>
<dbReference type="EMBL" id="BC069393">
    <property type="protein sequence ID" value="AAH69393.1"/>
    <property type="molecule type" value="mRNA"/>
</dbReference>
<dbReference type="EMBL" id="BC069816">
    <property type="protein sequence ID" value="AAH69816.1"/>
    <property type="molecule type" value="mRNA"/>
</dbReference>
<dbReference type="CCDS" id="CCDS14674.1"/>
<dbReference type="CCDS" id="CCDS44007.1"/>
<dbReference type="RefSeq" id="NP_038481.2">
    <property type="nucleotide sequence ID" value="NM_013453.3"/>
</dbReference>
<dbReference type="RefSeq" id="NP_663695.1">
    <property type="nucleotide sequence ID" value="NM_145662.3"/>
</dbReference>
<dbReference type="BioGRID" id="119032">
    <property type="interactions" value="9"/>
</dbReference>
<dbReference type="BioGRID" id="609133">
    <property type="interactions" value="10"/>
</dbReference>
<dbReference type="FunCoup" id="Q9NS26">
    <property type="interactions" value="105"/>
</dbReference>
<dbReference type="IntAct" id="Q9NS26">
    <property type="interactions" value="8"/>
</dbReference>
<dbReference type="MINT" id="Q9NS26"/>
<dbReference type="STRING" id="9606.ENSP00000359549"/>
<dbReference type="iPTMnet" id="Q9NS26"/>
<dbReference type="PhosphoSitePlus" id="Q9NS26"/>
<dbReference type="BioMuta" id="SPANXA1"/>
<dbReference type="DMDM" id="77416663"/>
<dbReference type="MassIVE" id="Q9NS26"/>
<dbReference type="PaxDb" id="9606-ENSP00000359549"/>
<dbReference type="PeptideAtlas" id="Q9NS26"/>
<dbReference type="ProteomicsDB" id="82474"/>
<dbReference type="Pumba" id="Q9NS26"/>
<dbReference type="Antibodypedia" id="71820">
    <property type="antibodies" value="18 antibodies from 6 providers"/>
</dbReference>
<dbReference type="Antibodypedia" id="74669">
    <property type="antibodies" value="18 antibodies from 5 providers"/>
</dbReference>
<dbReference type="DNASU" id="30014"/>
<dbReference type="Ensembl" id="ENST00000370518.4">
    <property type="protein sequence ID" value="ENSP00000359549.3"/>
    <property type="gene ID" value="ENSG00000203926.5"/>
</dbReference>
<dbReference type="Ensembl" id="ENST00000370519.4">
    <property type="protein sequence ID" value="ENSP00000359550.3"/>
    <property type="gene ID" value="ENSG00000198021.8"/>
</dbReference>
<dbReference type="GeneID" id="30014"/>
<dbReference type="GeneID" id="728712"/>
<dbReference type="KEGG" id="hsa:30014"/>
<dbReference type="KEGG" id="hsa:728712"/>
<dbReference type="MANE-Select" id="ENST00000370518.4">
    <property type="protein sequence ID" value="ENSP00000359549.3"/>
    <property type="RefSeq nucleotide sequence ID" value="NM_145662.4"/>
    <property type="RefSeq protein sequence ID" value="NP_663695.1"/>
</dbReference>
<dbReference type="MANE-Select" id="ENST00000370519.4">
    <property type="protein sequence ID" value="ENSP00000359550.3"/>
    <property type="RefSeq nucleotide sequence ID" value="NM_013453.3"/>
    <property type="RefSeq protein sequence ID" value="NP_038481.2"/>
</dbReference>
<dbReference type="UCSC" id="uc004fbn.4">
    <property type="organism name" value="human"/>
</dbReference>
<dbReference type="AGR" id="HGNC:11218"/>
<dbReference type="AGR" id="HGNC:14328"/>
<dbReference type="CTD" id="30014"/>
<dbReference type="CTD" id="728712"/>
<dbReference type="DisGeNET" id="30014"/>
<dbReference type="DisGeNET" id="728712"/>
<dbReference type="GeneCards" id="SPANXA1"/>
<dbReference type="GeneCards" id="SPANXA2"/>
<dbReference type="HGNC" id="HGNC:11218">
    <property type="gene designation" value="SPANXA1"/>
</dbReference>
<dbReference type="HGNC" id="HGNC:14328">
    <property type="gene designation" value="SPANXA2"/>
</dbReference>
<dbReference type="HPA" id="ENSG00000198021">
    <property type="expression patterns" value="Tissue enriched (testis)"/>
</dbReference>
<dbReference type="HPA" id="ENSG00000203926">
    <property type="expression patterns" value="Tissue enriched (testis)"/>
</dbReference>
<dbReference type="MIM" id="300305">
    <property type="type" value="gene"/>
</dbReference>
<dbReference type="MIM" id="300493">
    <property type="type" value="gene"/>
</dbReference>
<dbReference type="neXtProt" id="NX_Q9NS26"/>
<dbReference type="OpenTargets" id="ENSG00000198021"/>
<dbReference type="PharmGKB" id="PA37870"/>
<dbReference type="VEuPathDB" id="HostDB:ENSG00000198021"/>
<dbReference type="VEuPathDB" id="HostDB:ENSG00000203926"/>
<dbReference type="eggNOG" id="ENOG502TEHU">
    <property type="taxonomic scope" value="Eukaryota"/>
</dbReference>
<dbReference type="GeneTree" id="ENSGT00730000111796"/>
<dbReference type="HOGENOM" id="CLU_140435_1_0_1"/>
<dbReference type="InParanoid" id="Q9NS26"/>
<dbReference type="OMA" id="MPETQSG"/>
<dbReference type="PAN-GO" id="Q9NS26">
    <property type="GO annotations" value="0 GO annotations based on evolutionary models"/>
</dbReference>
<dbReference type="PhylomeDB" id="Q9NS26"/>
<dbReference type="TreeFam" id="TF341404"/>
<dbReference type="PathwayCommons" id="Q9NS26"/>
<dbReference type="SignaLink" id="Q9NS26"/>
<dbReference type="BioGRID-ORCS" id="30014">
    <property type="hits" value="13 hits in 265 CRISPR screens"/>
</dbReference>
<dbReference type="BioGRID-ORCS" id="728712">
    <property type="hits" value="59 hits in 602 CRISPR screens"/>
</dbReference>
<dbReference type="Pharos" id="Q9NS26">
    <property type="development level" value="Tbio"/>
</dbReference>
<dbReference type="PRO" id="PR:Q9NS26"/>
<dbReference type="Proteomes" id="UP000005640">
    <property type="component" value="Chromosome X"/>
</dbReference>
<dbReference type="RNAct" id="Q9NS26">
    <property type="molecule type" value="protein"/>
</dbReference>
<dbReference type="Bgee" id="ENSG00000198021">
    <property type="expression patterns" value="Expressed in male germ line stem cell (sensu Vertebrata) in testis and 10 other cell types or tissues"/>
</dbReference>
<dbReference type="GO" id="GO:0005737">
    <property type="term" value="C:cytoplasm"/>
    <property type="evidence" value="ECO:0000304"/>
    <property type="project" value="ProtInc"/>
</dbReference>
<dbReference type="GO" id="GO:0005634">
    <property type="term" value="C:nucleus"/>
    <property type="evidence" value="ECO:0007005"/>
    <property type="project" value="UniProtKB"/>
</dbReference>
<dbReference type="GO" id="GO:0007283">
    <property type="term" value="P:spermatogenesis"/>
    <property type="evidence" value="ECO:0000304"/>
    <property type="project" value="ProtInc"/>
</dbReference>
<dbReference type="InterPro" id="IPR010007">
    <property type="entry name" value="SPAN-X_fam"/>
</dbReference>
<dbReference type="Pfam" id="PF07458">
    <property type="entry name" value="SPAN-X"/>
    <property type="match status" value="1"/>
</dbReference>
<feature type="chain" id="PRO_0000189549" description="Sperm protein associated with the nucleus on the X chromosome A">
    <location>
        <begin position="1"/>
        <end position="97"/>
    </location>
</feature>
<feature type="region of interest" description="Disordered" evidence="2">
    <location>
        <begin position="1"/>
        <end position="49"/>
    </location>
</feature>
<feature type="short sequence motif" description="Nuclear localization signal" evidence="1">
    <location>
        <begin position="37"/>
        <end position="45"/>
    </location>
</feature>
<reference key="1">
    <citation type="journal article" date="2000" name="Biol. Reprod.">
        <title>Spermatid-specific expression of the novel X-linked gene product SPAN-X localized to the nucleus of human spermatozoa.</title>
        <authorList>
            <person name="Westbrook V.A."/>
            <person name="Diekman A.B."/>
            <person name="Klotz K.L."/>
            <person name="Khole V.V."/>
            <person name="von Kap-Herr C."/>
            <person name="Golden W.L."/>
            <person name="Eddy R.L."/>
            <person name="Shows T.B."/>
            <person name="Stoler M.H."/>
            <person name="Lee C.-G."/>
            <person name="Flickinger C.J."/>
            <person name="Herr J.C."/>
        </authorList>
    </citation>
    <scope>NUCLEOTIDE SEQUENCE [MRNA]</scope>
    <scope>DEVELOPMENTAL STAGE</scope>
    <scope>TISSUE SPECIFICITY</scope>
    <scope>SUBCELLULAR LOCATION</scope>
    <source>
        <tissue>Testis</tissue>
    </source>
</reference>
<reference key="2">
    <citation type="journal article" date="2003" name="Gene">
        <title>The human SPANX multigene family: genomic organization, alignment and expression in male germ cells and tumor cell lines.</title>
        <authorList>
            <person name="Zendman A.J."/>
            <person name="Zschocke J."/>
            <person name="van Kraats A.A."/>
            <person name="de Wit N.J.W."/>
            <person name="Kurpisz M."/>
            <person name="Weidle U.H."/>
            <person name="Ruiter D.J."/>
            <person name="Weiss E.H."/>
            <person name="van Muijen G.N.P."/>
        </authorList>
    </citation>
    <scope>NUCLEOTIDE SEQUENCE [GENOMIC DNA]</scope>
    <scope>DEVELOPMENTAL STAGE</scope>
    <scope>TISSUE SPECIFICITY</scope>
</reference>
<reference key="3">
    <citation type="journal article" date="2005" name="Genome Res.">
        <title>Dynamic structure of the SPANX gene cluster mapped to the prostate cancer susceptibility locus HPCX at Xq27.</title>
        <authorList>
            <person name="Kouprina N."/>
            <person name="Pavlicek A."/>
            <person name="Noskov V.N."/>
            <person name="Solomon G."/>
            <person name="Otstot J."/>
            <person name="Isaacs W."/>
            <person name="Carpten J.D."/>
            <person name="Trent J.M."/>
            <person name="Schleutker J."/>
            <person name="Barrett J.C."/>
            <person name="Jurka J."/>
            <person name="Larionov V."/>
        </authorList>
    </citation>
    <scope>NUCLEOTIDE SEQUENCE [MRNA]</scope>
</reference>
<reference key="4">
    <citation type="journal article" date="2007" name="Prostate">
        <title>Mutational analysis of SPANX genes in families with X-linked prostate cancer.</title>
        <authorList>
            <person name="Kouprina N."/>
            <person name="Noskov V.N."/>
            <person name="Solomon G."/>
            <person name="Otstot J."/>
            <person name="Isaacs W."/>
            <person name="Xu J."/>
            <person name="Schleutker J."/>
            <person name="Larionov V."/>
        </authorList>
    </citation>
    <scope>NUCLEOTIDE SEQUENCE [GENOMIC DNA]</scope>
</reference>
<reference key="5">
    <citation type="journal article" date="2005" name="Nature">
        <title>The DNA sequence of the human X chromosome.</title>
        <authorList>
            <person name="Ross M.T."/>
            <person name="Grafham D.V."/>
            <person name="Coffey A.J."/>
            <person name="Scherer S."/>
            <person name="McLay K."/>
            <person name="Muzny D."/>
            <person name="Platzer M."/>
            <person name="Howell G.R."/>
            <person name="Burrows C."/>
            <person name="Bird C.P."/>
            <person name="Frankish A."/>
            <person name="Lovell F.L."/>
            <person name="Howe K.L."/>
            <person name="Ashurst J.L."/>
            <person name="Fulton R.S."/>
            <person name="Sudbrak R."/>
            <person name="Wen G."/>
            <person name="Jones M.C."/>
            <person name="Hurles M.E."/>
            <person name="Andrews T.D."/>
            <person name="Scott C.E."/>
            <person name="Searle S."/>
            <person name="Ramser J."/>
            <person name="Whittaker A."/>
            <person name="Deadman R."/>
            <person name="Carter N.P."/>
            <person name="Hunt S.E."/>
            <person name="Chen R."/>
            <person name="Cree A."/>
            <person name="Gunaratne P."/>
            <person name="Havlak P."/>
            <person name="Hodgson A."/>
            <person name="Metzker M.L."/>
            <person name="Richards S."/>
            <person name="Scott G."/>
            <person name="Steffen D."/>
            <person name="Sodergren E."/>
            <person name="Wheeler D.A."/>
            <person name="Worley K.C."/>
            <person name="Ainscough R."/>
            <person name="Ambrose K.D."/>
            <person name="Ansari-Lari M.A."/>
            <person name="Aradhya S."/>
            <person name="Ashwell R.I."/>
            <person name="Babbage A.K."/>
            <person name="Bagguley C.L."/>
            <person name="Ballabio A."/>
            <person name="Banerjee R."/>
            <person name="Barker G.E."/>
            <person name="Barlow K.F."/>
            <person name="Barrett I.P."/>
            <person name="Bates K.N."/>
            <person name="Beare D.M."/>
            <person name="Beasley H."/>
            <person name="Beasley O."/>
            <person name="Beck A."/>
            <person name="Bethel G."/>
            <person name="Blechschmidt K."/>
            <person name="Brady N."/>
            <person name="Bray-Allen S."/>
            <person name="Bridgeman A.M."/>
            <person name="Brown A.J."/>
            <person name="Brown M.J."/>
            <person name="Bonnin D."/>
            <person name="Bruford E.A."/>
            <person name="Buhay C."/>
            <person name="Burch P."/>
            <person name="Burford D."/>
            <person name="Burgess J."/>
            <person name="Burrill W."/>
            <person name="Burton J."/>
            <person name="Bye J.M."/>
            <person name="Carder C."/>
            <person name="Carrel L."/>
            <person name="Chako J."/>
            <person name="Chapman J.C."/>
            <person name="Chavez D."/>
            <person name="Chen E."/>
            <person name="Chen G."/>
            <person name="Chen Y."/>
            <person name="Chen Z."/>
            <person name="Chinault C."/>
            <person name="Ciccodicola A."/>
            <person name="Clark S.Y."/>
            <person name="Clarke G."/>
            <person name="Clee C.M."/>
            <person name="Clegg S."/>
            <person name="Clerc-Blankenburg K."/>
            <person name="Clifford K."/>
            <person name="Cobley V."/>
            <person name="Cole C.G."/>
            <person name="Conquer J.S."/>
            <person name="Corby N."/>
            <person name="Connor R.E."/>
            <person name="David R."/>
            <person name="Davies J."/>
            <person name="Davis C."/>
            <person name="Davis J."/>
            <person name="Delgado O."/>
            <person name="Deshazo D."/>
            <person name="Dhami P."/>
            <person name="Ding Y."/>
            <person name="Dinh H."/>
            <person name="Dodsworth S."/>
            <person name="Draper H."/>
            <person name="Dugan-Rocha S."/>
            <person name="Dunham A."/>
            <person name="Dunn M."/>
            <person name="Durbin K.J."/>
            <person name="Dutta I."/>
            <person name="Eades T."/>
            <person name="Ellwood M."/>
            <person name="Emery-Cohen A."/>
            <person name="Errington H."/>
            <person name="Evans K.L."/>
            <person name="Faulkner L."/>
            <person name="Francis F."/>
            <person name="Frankland J."/>
            <person name="Fraser A.E."/>
            <person name="Galgoczy P."/>
            <person name="Gilbert J."/>
            <person name="Gill R."/>
            <person name="Gloeckner G."/>
            <person name="Gregory S.G."/>
            <person name="Gribble S."/>
            <person name="Griffiths C."/>
            <person name="Grocock R."/>
            <person name="Gu Y."/>
            <person name="Gwilliam R."/>
            <person name="Hamilton C."/>
            <person name="Hart E.A."/>
            <person name="Hawes A."/>
            <person name="Heath P.D."/>
            <person name="Heitmann K."/>
            <person name="Hennig S."/>
            <person name="Hernandez J."/>
            <person name="Hinzmann B."/>
            <person name="Ho S."/>
            <person name="Hoffs M."/>
            <person name="Howden P.J."/>
            <person name="Huckle E.J."/>
            <person name="Hume J."/>
            <person name="Hunt P.J."/>
            <person name="Hunt A.R."/>
            <person name="Isherwood J."/>
            <person name="Jacob L."/>
            <person name="Johnson D."/>
            <person name="Jones S."/>
            <person name="de Jong P.J."/>
            <person name="Joseph S.S."/>
            <person name="Keenan S."/>
            <person name="Kelly S."/>
            <person name="Kershaw J.K."/>
            <person name="Khan Z."/>
            <person name="Kioschis P."/>
            <person name="Klages S."/>
            <person name="Knights A.J."/>
            <person name="Kosiura A."/>
            <person name="Kovar-Smith C."/>
            <person name="Laird G.K."/>
            <person name="Langford C."/>
            <person name="Lawlor S."/>
            <person name="Leversha M."/>
            <person name="Lewis L."/>
            <person name="Liu W."/>
            <person name="Lloyd C."/>
            <person name="Lloyd D.M."/>
            <person name="Loulseged H."/>
            <person name="Loveland J.E."/>
            <person name="Lovell J.D."/>
            <person name="Lozado R."/>
            <person name="Lu J."/>
            <person name="Lyne R."/>
            <person name="Ma J."/>
            <person name="Maheshwari M."/>
            <person name="Matthews L.H."/>
            <person name="McDowall J."/>
            <person name="McLaren S."/>
            <person name="McMurray A."/>
            <person name="Meidl P."/>
            <person name="Meitinger T."/>
            <person name="Milne S."/>
            <person name="Miner G."/>
            <person name="Mistry S.L."/>
            <person name="Morgan M."/>
            <person name="Morris S."/>
            <person name="Mueller I."/>
            <person name="Mullikin J.C."/>
            <person name="Nguyen N."/>
            <person name="Nordsiek G."/>
            <person name="Nyakatura G."/>
            <person name="O'dell C.N."/>
            <person name="Okwuonu G."/>
            <person name="Palmer S."/>
            <person name="Pandian R."/>
            <person name="Parker D."/>
            <person name="Parrish J."/>
            <person name="Pasternak S."/>
            <person name="Patel D."/>
            <person name="Pearce A.V."/>
            <person name="Pearson D.M."/>
            <person name="Pelan S.E."/>
            <person name="Perez L."/>
            <person name="Porter K.M."/>
            <person name="Ramsey Y."/>
            <person name="Reichwald K."/>
            <person name="Rhodes S."/>
            <person name="Ridler K.A."/>
            <person name="Schlessinger D."/>
            <person name="Schueler M.G."/>
            <person name="Sehra H.K."/>
            <person name="Shaw-Smith C."/>
            <person name="Shen H."/>
            <person name="Sheridan E.M."/>
            <person name="Shownkeen R."/>
            <person name="Skuce C.D."/>
            <person name="Smith M.L."/>
            <person name="Sotheran E.C."/>
            <person name="Steingruber H.E."/>
            <person name="Steward C.A."/>
            <person name="Storey R."/>
            <person name="Swann R.M."/>
            <person name="Swarbreck D."/>
            <person name="Tabor P.E."/>
            <person name="Taudien S."/>
            <person name="Taylor T."/>
            <person name="Teague B."/>
            <person name="Thomas K."/>
            <person name="Thorpe A."/>
            <person name="Timms K."/>
            <person name="Tracey A."/>
            <person name="Trevanion S."/>
            <person name="Tromans A.C."/>
            <person name="d'Urso M."/>
            <person name="Verduzco D."/>
            <person name="Villasana D."/>
            <person name="Waldron L."/>
            <person name="Wall M."/>
            <person name="Wang Q."/>
            <person name="Warren J."/>
            <person name="Warry G.L."/>
            <person name="Wei X."/>
            <person name="West A."/>
            <person name="Whitehead S.L."/>
            <person name="Whiteley M.N."/>
            <person name="Wilkinson J.E."/>
            <person name="Willey D.L."/>
            <person name="Williams G."/>
            <person name="Williams L."/>
            <person name="Williamson A."/>
            <person name="Williamson H."/>
            <person name="Wilming L."/>
            <person name="Woodmansey R.L."/>
            <person name="Wray P.W."/>
            <person name="Yen J."/>
            <person name="Zhang J."/>
            <person name="Zhou J."/>
            <person name="Zoghbi H."/>
            <person name="Zorilla S."/>
            <person name="Buck D."/>
            <person name="Reinhardt R."/>
            <person name="Poustka A."/>
            <person name="Rosenthal A."/>
            <person name="Lehrach H."/>
            <person name="Meindl A."/>
            <person name="Minx P.J."/>
            <person name="Hillier L.W."/>
            <person name="Willard H.F."/>
            <person name="Wilson R.K."/>
            <person name="Waterston R.H."/>
            <person name="Rice C.M."/>
            <person name="Vaudin M."/>
            <person name="Coulson A."/>
            <person name="Nelson D.L."/>
            <person name="Weinstock G."/>
            <person name="Sulston J.E."/>
            <person name="Durbin R.M."/>
            <person name="Hubbard T."/>
            <person name="Gibbs R.A."/>
            <person name="Beck S."/>
            <person name="Rogers J."/>
            <person name="Bentley D.R."/>
        </authorList>
    </citation>
    <scope>NUCLEOTIDE SEQUENCE [LARGE SCALE GENOMIC DNA]</scope>
</reference>
<reference key="6">
    <citation type="journal article" date="2004" name="Genome Res.">
        <title>The status, quality, and expansion of the NIH full-length cDNA project: the Mammalian Gene Collection (MGC).</title>
        <authorList>
            <consortium name="The MGC Project Team"/>
        </authorList>
    </citation>
    <scope>NUCLEOTIDE SEQUENCE [LARGE SCALE MRNA]</scope>
</reference>
<gene>
    <name evidence="7" type="primary">SPANXA1</name>
    <name type="synonym">SPANXA</name>
</gene>
<gene>
    <name evidence="8" type="primary">SPANXA2</name>
</gene>
<name>SPNXA_HUMAN</name>
<comment type="interaction">
    <interactant intactId="EBI-10313181">
        <id>Q9NS26</id>
    </interactant>
    <interactant intactId="EBI-12112376">
        <id>A0A0C4DGQ7</id>
        <label>EML2</label>
    </interactant>
    <organismsDiffer>false</organismsDiffer>
    <experiments>3</experiments>
</comment>
<comment type="interaction">
    <interactant intactId="EBI-10313181">
        <id>Q9NS26</id>
    </interactant>
    <interactant intactId="EBI-2548259">
        <id>Q9Y6X0</id>
        <label>SETBP1</label>
    </interactant>
    <organismsDiffer>false</organismsDiffer>
    <experiments>3</experiments>
</comment>
<comment type="interaction">
    <interactant intactId="EBI-10313181">
        <id>Q9NS26</id>
    </interactant>
    <interactant intactId="EBI-12235818">
        <id>Q9Y6X0-2</id>
        <label>SETBP1</label>
    </interactant>
    <organismsDiffer>false</organismsDiffer>
    <experiments>3</experiments>
</comment>
<comment type="subcellular location">
    <subcellularLocation>
        <location evidence="3">Cytoplasm</location>
    </subcellularLocation>
    <subcellularLocation>
        <location evidence="3">Nucleus</location>
    </subcellularLocation>
    <text>Associated with nuclear craters.</text>
</comment>
<comment type="tissue specificity">
    <text evidence="3 4">Detected in testis and sperm.</text>
</comment>
<comment type="developmental stage">
    <text evidence="3 4">Detected in round and elongating spermatids.</text>
</comment>
<comment type="similarity">
    <text evidence="5">Belongs to the SPAN-X family.</text>
</comment>
<organism>
    <name type="scientific">Homo sapiens</name>
    <name type="common">Human</name>
    <dbReference type="NCBI Taxonomy" id="9606"/>
    <lineage>
        <taxon>Eukaryota</taxon>
        <taxon>Metazoa</taxon>
        <taxon>Chordata</taxon>
        <taxon>Craniata</taxon>
        <taxon>Vertebrata</taxon>
        <taxon>Euteleostomi</taxon>
        <taxon>Mammalia</taxon>
        <taxon>Eutheria</taxon>
        <taxon>Euarchontoglires</taxon>
        <taxon>Primates</taxon>
        <taxon>Haplorrhini</taxon>
        <taxon>Catarrhini</taxon>
        <taxon>Hominidae</taxon>
        <taxon>Homo</taxon>
    </lineage>
</organism>
<sequence>MDKQSSAGGVKRSVPCDSNEANEMMPETPTGDSDPQPAPKKMKTSESSTILVVRYRRNFKRTSPEELLNDHARENRINPLQMEEEEFMEIMVEIPAK</sequence>
<proteinExistence type="evidence at protein level"/>
<accession>Q9NS26</accession>
<accession>Q5JWI0</accession>
<keyword id="KW-0963">Cytoplasm</keyword>
<keyword id="KW-0539">Nucleus</keyword>
<keyword id="KW-1267">Proteomics identification</keyword>
<keyword id="KW-1185">Reference proteome</keyword>
<protein>
    <recommendedName>
        <fullName evidence="5">Sperm protein associated with the nucleus on the X chromosome A</fullName>
    </recommendedName>
    <alternativeName>
        <fullName>Cancer/testis antigen 11.1</fullName>
        <shortName evidence="7">CT11.1</shortName>
    </alternativeName>
    <alternativeName>
        <fullName evidence="6">Nuclear-associated protein SPAN-Xa</fullName>
        <shortName>SPAN-X</shortName>
        <shortName>SPANX-A</shortName>
    </alternativeName>
    <alternativeName>
        <fullName>SPANX family member A</fullName>
    </alternativeName>
</protein>
<evidence type="ECO:0000255" key="1"/>
<evidence type="ECO:0000256" key="2">
    <source>
        <dbReference type="SAM" id="MobiDB-lite"/>
    </source>
</evidence>
<evidence type="ECO:0000269" key="3">
    <source>
    </source>
</evidence>
<evidence type="ECO:0000269" key="4">
    <source>
    </source>
</evidence>
<evidence type="ECO:0000305" key="5"/>
<evidence type="ECO:0000312" key="6">
    <source>
        <dbReference type="EMBL" id="AAF28420.1"/>
    </source>
</evidence>
<evidence type="ECO:0000312" key="7">
    <source>
        <dbReference type="HGNC" id="HGNC:11218"/>
    </source>
</evidence>
<evidence type="ECO:0000312" key="8">
    <source>
        <dbReference type="HGNC" id="HGNC:14328"/>
    </source>
</evidence>